<gene>
    <name evidence="1" type="primary">der</name>
    <name type="synonym">engA</name>
    <name type="ordered locus">TM1040_0991</name>
</gene>
<protein>
    <recommendedName>
        <fullName evidence="1">GTPase Der</fullName>
    </recommendedName>
    <alternativeName>
        <fullName evidence="1">GTP-binding protein EngA</fullName>
    </alternativeName>
</protein>
<dbReference type="EMBL" id="CP000377">
    <property type="protein sequence ID" value="ABF63724.1"/>
    <property type="molecule type" value="Genomic_DNA"/>
</dbReference>
<dbReference type="RefSeq" id="WP_011538334.1">
    <property type="nucleotide sequence ID" value="NC_008044.1"/>
</dbReference>
<dbReference type="SMR" id="Q1GHZ2"/>
<dbReference type="STRING" id="292414.TM1040_0991"/>
<dbReference type="KEGG" id="sit:TM1040_0991"/>
<dbReference type="eggNOG" id="COG1160">
    <property type="taxonomic scope" value="Bacteria"/>
</dbReference>
<dbReference type="HOGENOM" id="CLU_016077_5_0_5"/>
<dbReference type="OrthoDB" id="9805918at2"/>
<dbReference type="Proteomes" id="UP000000636">
    <property type="component" value="Chromosome"/>
</dbReference>
<dbReference type="GO" id="GO:0005525">
    <property type="term" value="F:GTP binding"/>
    <property type="evidence" value="ECO:0007669"/>
    <property type="project" value="UniProtKB-UniRule"/>
</dbReference>
<dbReference type="GO" id="GO:0042254">
    <property type="term" value="P:ribosome biogenesis"/>
    <property type="evidence" value="ECO:0007669"/>
    <property type="project" value="UniProtKB-KW"/>
</dbReference>
<dbReference type="CDD" id="cd01894">
    <property type="entry name" value="EngA1"/>
    <property type="match status" value="1"/>
</dbReference>
<dbReference type="CDD" id="cd01895">
    <property type="entry name" value="EngA2"/>
    <property type="match status" value="1"/>
</dbReference>
<dbReference type="FunFam" id="3.30.300.20:FF:000004">
    <property type="entry name" value="GTPase Der"/>
    <property type="match status" value="1"/>
</dbReference>
<dbReference type="Gene3D" id="3.30.300.20">
    <property type="match status" value="1"/>
</dbReference>
<dbReference type="Gene3D" id="3.40.50.300">
    <property type="entry name" value="P-loop containing nucleotide triphosphate hydrolases"/>
    <property type="match status" value="2"/>
</dbReference>
<dbReference type="HAMAP" id="MF_00195">
    <property type="entry name" value="GTPase_Der"/>
    <property type="match status" value="1"/>
</dbReference>
<dbReference type="InterPro" id="IPR031166">
    <property type="entry name" value="G_ENGA"/>
</dbReference>
<dbReference type="InterPro" id="IPR006073">
    <property type="entry name" value="GTP-bd"/>
</dbReference>
<dbReference type="InterPro" id="IPR016484">
    <property type="entry name" value="GTPase_Der"/>
</dbReference>
<dbReference type="InterPro" id="IPR032859">
    <property type="entry name" value="KH_dom-like"/>
</dbReference>
<dbReference type="InterPro" id="IPR015946">
    <property type="entry name" value="KH_dom-like_a/b"/>
</dbReference>
<dbReference type="InterPro" id="IPR027417">
    <property type="entry name" value="P-loop_NTPase"/>
</dbReference>
<dbReference type="InterPro" id="IPR005225">
    <property type="entry name" value="Small_GTP-bd"/>
</dbReference>
<dbReference type="NCBIfam" id="TIGR03594">
    <property type="entry name" value="GTPase_EngA"/>
    <property type="match status" value="1"/>
</dbReference>
<dbReference type="NCBIfam" id="TIGR00231">
    <property type="entry name" value="small_GTP"/>
    <property type="match status" value="2"/>
</dbReference>
<dbReference type="PANTHER" id="PTHR43834">
    <property type="entry name" value="GTPASE DER"/>
    <property type="match status" value="1"/>
</dbReference>
<dbReference type="PANTHER" id="PTHR43834:SF6">
    <property type="entry name" value="GTPASE DER"/>
    <property type="match status" value="1"/>
</dbReference>
<dbReference type="Pfam" id="PF14714">
    <property type="entry name" value="KH_dom-like"/>
    <property type="match status" value="1"/>
</dbReference>
<dbReference type="Pfam" id="PF01926">
    <property type="entry name" value="MMR_HSR1"/>
    <property type="match status" value="2"/>
</dbReference>
<dbReference type="PIRSF" id="PIRSF006485">
    <property type="entry name" value="GTP-binding_EngA"/>
    <property type="match status" value="1"/>
</dbReference>
<dbReference type="PRINTS" id="PR00449">
    <property type="entry name" value="RASTRNSFRMNG"/>
</dbReference>
<dbReference type="SUPFAM" id="SSF52540">
    <property type="entry name" value="P-loop containing nucleoside triphosphate hydrolases"/>
    <property type="match status" value="2"/>
</dbReference>
<dbReference type="PROSITE" id="PS51712">
    <property type="entry name" value="G_ENGA"/>
    <property type="match status" value="2"/>
</dbReference>
<evidence type="ECO:0000255" key="1">
    <source>
        <dbReference type="HAMAP-Rule" id="MF_00195"/>
    </source>
</evidence>
<evidence type="ECO:0000256" key="2">
    <source>
        <dbReference type="SAM" id="MobiDB-lite"/>
    </source>
</evidence>
<proteinExistence type="inferred from homology"/>
<reference key="1">
    <citation type="submission" date="2006-05" db="EMBL/GenBank/DDBJ databases">
        <title>Complete sequence of chromosome of Silicibacter sp. TM1040.</title>
        <authorList>
            <consortium name="US DOE Joint Genome Institute"/>
            <person name="Copeland A."/>
            <person name="Lucas S."/>
            <person name="Lapidus A."/>
            <person name="Barry K."/>
            <person name="Detter J.C."/>
            <person name="Glavina del Rio T."/>
            <person name="Hammon N."/>
            <person name="Israni S."/>
            <person name="Dalin E."/>
            <person name="Tice H."/>
            <person name="Pitluck S."/>
            <person name="Brettin T."/>
            <person name="Bruce D."/>
            <person name="Han C."/>
            <person name="Tapia R."/>
            <person name="Goodwin L."/>
            <person name="Thompson L.S."/>
            <person name="Gilna P."/>
            <person name="Schmutz J."/>
            <person name="Larimer F."/>
            <person name="Land M."/>
            <person name="Hauser L."/>
            <person name="Kyrpides N."/>
            <person name="Kim E."/>
            <person name="Belas R."/>
            <person name="Moran M.A."/>
            <person name="Buchan A."/>
            <person name="Gonzalez J.M."/>
            <person name="Schell M.A."/>
            <person name="Sun F."/>
            <person name="Richardson P."/>
        </authorList>
    </citation>
    <scope>NUCLEOTIDE SEQUENCE [LARGE SCALE GENOMIC DNA]</scope>
    <source>
        <strain>TM1040</strain>
    </source>
</reference>
<feature type="chain" id="PRO_1000011744" description="GTPase Der">
    <location>
        <begin position="1"/>
        <end position="492"/>
    </location>
</feature>
<feature type="domain" description="EngA-type G 1">
    <location>
        <begin position="3"/>
        <end position="167"/>
    </location>
</feature>
<feature type="domain" description="EngA-type G 2">
    <location>
        <begin position="207"/>
        <end position="382"/>
    </location>
</feature>
<feature type="domain" description="KH-like" evidence="1">
    <location>
        <begin position="383"/>
        <end position="469"/>
    </location>
</feature>
<feature type="region of interest" description="Disordered" evidence="2">
    <location>
        <begin position="461"/>
        <end position="492"/>
    </location>
</feature>
<feature type="compositionally biased region" description="Basic residues" evidence="2">
    <location>
        <begin position="472"/>
        <end position="492"/>
    </location>
</feature>
<feature type="binding site" evidence="1">
    <location>
        <begin position="9"/>
        <end position="16"/>
    </location>
    <ligand>
        <name>GTP</name>
        <dbReference type="ChEBI" id="CHEBI:37565"/>
        <label>1</label>
    </ligand>
</feature>
<feature type="binding site" evidence="1">
    <location>
        <begin position="56"/>
        <end position="60"/>
    </location>
    <ligand>
        <name>GTP</name>
        <dbReference type="ChEBI" id="CHEBI:37565"/>
        <label>1</label>
    </ligand>
</feature>
<feature type="binding site" evidence="1">
    <location>
        <begin position="119"/>
        <end position="122"/>
    </location>
    <ligand>
        <name>GTP</name>
        <dbReference type="ChEBI" id="CHEBI:37565"/>
        <label>1</label>
    </ligand>
</feature>
<feature type="binding site" evidence="1">
    <location>
        <begin position="213"/>
        <end position="220"/>
    </location>
    <ligand>
        <name>GTP</name>
        <dbReference type="ChEBI" id="CHEBI:37565"/>
        <label>2</label>
    </ligand>
</feature>
<feature type="binding site" evidence="1">
    <location>
        <begin position="260"/>
        <end position="264"/>
    </location>
    <ligand>
        <name>GTP</name>
        <dbReference type="ChEBI" id="CHEBI:37565"/>
        <label>2</label>
    </ligand>
</feature>
<feature type="binding site" evidence="1">
    <location>
        <begin position="325"/>
        <end position="328"/>
    </location>
    <ligand>
        <name>GTP</name>
        <dbReference type="ChEBI" id="CHEBI:37565"/>
        <label>2</label>
    </ligand>
</feature>
<accession>Q1GHZ2</accession>
<name>DER_RUEST</name>
<comment type="function">
    <text evidence="1">GTPase that plays an essential role in the late steps of ribosome biogenesis.</text>
</comment>
<comment type="subunit">
    <text evidence="1">Associates with the 50S ribosomal subunit.</text>
</comment>
<comment type="similarity">
    <text evidence="1">Belongs to the TRAFAC class TrmE-Era-EngA-EngB-Septin-like GTPase superfamily. EngA (Der) GTPase family.</text>
</comment>
<sequence>MSFTLAIVGRPNVGKSTLFNRLVGKKLALVDDQPGVTRDLREGEARLGDLRFTVIDSAGLEDATDNSLEGRMRRLTERAVEMADVCLFLIDARAGVTPTDEVFAEILRKKSAHVILAANKSEGSAADAGVLEAYGLGLGEPIRMSGEHGEGLNDLYSELLPVSEKFEKLAEETAPETDVVLDEDENEAFNAGEEIAATPVPTLEKPLQVAVVGRPNAGKSTLINKILGEDRLLTGPEAGITRDAISLKIDWSGTPMRIFDTAGMRKKAKVQEKLEKLSVSDGLRAVKFAEVVVVLLDAAIPFEQQDLRIADLAEREGRAVVIAVNKWDIEDEKQEKLKALKEAFERLLPQLRGAPLVTVSAKTGRGLDRLHAAIMKAHDVWNRRVPTAALNRWLAGMLEQHPPPAPQGKRIKLRYMTQAKTRPPGFVVMCSHPDKMPASYNRYLVNGLREDFDMPGTPIRLTLRGQGDKNPYKGKKKSTPSRLRKHLEGRKS</sequence>
<organism>
    <name type="scientific">Ruegeria sp. (strain TM1040)</name>
    <name type="common">Silicibacter sp.</name>
    <dbReference type="NCBI Taxonomy" id="292414"/>
    <lineage>
        <taxon>Bacteria</taxon>
        <taxon>Pseudomonadati</taxon>
        <taxon>Pseudomonadota</taxon>
        <taxon>Alphaproteobacteria</taxon>
        <taxon>Rhodobacterales</taxon>
        <taxon>Roseobacteraceae</taxon>
        <taxon>Ruegeria</taxon>
    </lineage>
</organism>
<keyword id="KW-0342">GTP-binding</keyword>
<keyword id="KW-0547">Nucleotide-binding</keyword>
<keyword id="KW-1185">Reference proteome</keyword>
<keyword id="KW-0677">Repeat</keyword>
<keyword id="KW-0690">Ribosome biogenesis</keyword>